<name>SYFA_LEIXX</name>
<dbReference type="EC" id="6.1.1.20" evidence="1"/>
<dbReference type="EMBL" id="AE016822">
    <property type="protein sequence ID" value="AAT88558.1"/>
    <property type="molecule type" value="Genomic_DNA"/>
</dbReference>
<dbReference type="RefSeq" id="WP_011185557.1">
    <property type="nucleotide sequence ID" value="NC_006087.1"/>
</dbReference>
<dbReference type="SMR" id="Q6AGD7"/>
<dbReference type="STRING" id="281090.Lxx05980"/>
<dbReference type="KEGG" id="lxx:Lxx05980"/>
<dbReference type="eggNOG" id="COG0016">
    <property type="taxonomic scope" value="Bacteria"/>
</dbReference>
<dbReference type="HOGENOM" id="CLU_025086_0_1_11"/>
<dbReference type="Proteomes" id="UP000001306">
    <property type="component" value="Chromosome"/>
</dbReference>
<dbReference type="GO" id="GO:0005737">
    <property type="term" value="C:cytoplasm"/>
    <property type="evidence" value="ECO:0007669"/>
    <property type="project" value="UniProtKB-SubCell"/>
</dbReference>
<dbReference type="GO" id="GO:0005524">
    <property type="term" value="F:ATP binding"/>
    <property type="evidence" value="ECO:0007669"/>
    <property type="project" value="UniProtKB-UniRule"/>
</dbReference>
<dbReference type="GO" id="GO:0000287">
    <property type="term" value="F:magnesium ion binding"/>
    <property type="evidence" value="ECO:0007669"/>
    <property type="project" value="UniProtKB-UniRule"/>
</dbReference>
<dbReference type="GO" id="GO:0004826">
    <property type="term" value="F:phenylalanine-tRNA ligase activity"/>
    <property type="evidence" value="ECO:0007669"/>
    <property type="project" value="UniProtKB-UniRule"/>
</dbReference>
<dbReference type="GO" id="GO:0000049">
    <property type="term" value="F:tRNA binding"/>
    <property type="evidence" value="ECO:0007669"/>
    <property type="project" value="InterPro"/>
</dbReference>
<dbReference type="GO" id="GO:0006432">
    <property type="term" value="P:phenylalanyl-tRNA aminoacylation"/>
    <property type="evidence" value="ECO:0007669"/>
    <property type="project" value="UniProtKB-UniRule"/>
</dbReference>
<dbReference type="CDD" id="cd00496">
    <property type="entry name" value="PheRS_alpha_core"/>
    <property type="match status" value="1"/>
</dbReference>
<dbReference type="Gene3D" id="3.30.930.10">
    <property type="entry name" value="Bira Bifunctional Protein, Domain 2"/>
    <property type="match status" value="1"/>
</dbReference>
<dbReference type="HAMAP" id="MF_00281">
    <property type="entry name" value="Phe_tRNA_synth_alpha1"/>
    <property type="match status" value="1"/>
</dbReference>
<dbReference type="InterPro" id="IPR006195">
    <property type="entry name" value="aa-tRNA-synth_II"/>
</dbReference>
<dbReference type="InterPro" id="IPR045864">
    <property type="entry name" value="aa-tRNA-synth_II/BPL/LPL"/>
</dbReference>
<dbReference type="InterPro" id="IPR004529">
    <property type="entry name" value="Phe-tRNA-synth_IIc_asu"/>
</dbReference>
<dbReference type="InterPro" id="IPR004188">
    <property type="entry name" value="Phe-tRNA_ligase_II_N"/>
</dbReference>
<dbReference type="InterPro" id="IPR022911">
    <property type="entry name" value="Phe_tRNA_ligase_alpha1_bac"/>
</dbReference>
<dbReference type="InterPro" id="IPR002319">
    <property type="entry name" value="Phenylalanyl-tRNA_Synthase"/>
</dbReference>
<dbReference type="InterPro" id="IPR010978">
    <property type="entry name" value="tRNA-bd_arm"/>
</dbReference>
<dbReference type="NCBIfam" id="TIGR00468">
    <property type="entry name" value="pheS"/>
    <property type="match status" value="1"/>
</dbReference>
<dbReference type="PANTHER" id="PTHR11538:SF41">
    <property type="entry name" value="PHENYLALANINE--TRNA LIGASE, MITOCHONDRIAL"/>
    <property type="match status" value="1"/>
</dbReference>
<dbReference type="PANTHER" id="PTHR11538">
    <property type="entry name" value="PHENYLALANYL-TRNA SYNTHETASE"/>
    <property type="match status" value="1"/>
</dbReference>
<dbReference type="Pfam" id="PF02912">
    <property type="entry name" value="Phe_tRNA-synt_N"/>
    <property type="match status" value="1"/>
</dbReference>
<dbReference type="Pfam" id="PF01409">
    <property type="entry name" value="tRNA-synt_2d"/>
    <property type="match status" value="1"/>
</dbReference>
<dbReference type="SUPFAM" id="SSF55681">
    <property type="entry name" value="Class II aaRS and biotin synthetases"/>
    <property type="match status" value="1"/>
</dbReference>
<dbReference type="SUPFAM" id="SSF46589">
    <property type="entry name" value="tRNA-binding arm"/>
    <property type="match status" value="1"/>
</dbReference>
<dbReference type="PROSITE" id="PS50862">
    <property type="entry name" value="AA_TRNA_LIGASE_II"/>
    <property type="match status" value="1"/>
</dbReference>
<accession>Q6AGD7</accession>
<gene>
    <name evidence="1" type="primary">pheS</name>
    <name type="ordered locus">Lxx05980</name>
</gene>
<feature type="chain" id="PRO_0000126720" description="Phenylalanine--tRNA ligase alpha subunit">
    <location>
        <begin position="1"/>
        <end position="346"/>
    </location>
</feature>
<feature type="binding site" evidence="1">
    <location>
        <position position="264"/>
    </location>
    <ligand>
        <name>Mg(2+)</name>
        <dbReference type="ChEBI" id="CHEBI:18420"/>
        <note>shared with beta subunit</note>
    </ligand>
</feature>
<keyword id="KW-0030">Aminoacyl-tRNA synthetase</keyword>
<keyword id="KW-0067">ATP-binding</keyword>
<keyword id="KW-0963">Cytoplasm</keyword>
<keyword id="KW-0436">Ligase</keyword>
<keyword id="KW-0460">Magnesium</keyword>
<keyword id="KW-0479">Metal-binding</keyword>
<keyword id="KW-0547">Nucleotide-binding</keyword>
<keyword id="KW-0648">Protein biosynthesis</keyword>
<keyword id="KW-1185">Reference proteome</keyword>
<protein>
    <recommendedName>
        <fullName evidence="1">Phenylalanine--tRNA ligase alpha subunit</fullName>
        <ecNumber evidence="1">6.1.1.20</ecNumber>
    </recommendedName>
    <alternativeName>
        <fullName evidence="1">Phenylalanyl-tRNA synthetase alpha subunit</fullName>
        <shortName evidence="1">PheRS</shortName>
    </alternativeName>
</protein>
<organism>
    <name type="scientific">Leifsonia xyli subsp. xyli (strain CTCB07)</name>
    <dbReference type="NCBI Taxonomy" id="281090"/>
    <lineage>
        <taxon>Bacteria</taxon>
        <taxon>Bacillati</taxon>
        <taxon>Actinomycetota</taxon>
        <taxon>Actinomycetes</taxon>
        <taxon>Micrococcales</taxon>
        <taxon>Microbacteriaceae</taxon>
        <taxon>Leifsonia</taxon>
    </lineage>
</organism>
<proteinExistence type="inferred from homology"/>
<evidence type="ECO:0000255" key="1">
    <source>
        <dbReference type="HAMAP-Rule" id="MF_00281"/>
    </source>
</evidence>
<comment type="catalytic activity">
    <reaction evidence="1">
        <text>tRNA(Phe) + L-phenylalanine + ATP = L-phenylalanyl-tRNA(Phe) + AMP + diphosphate + H(+)</text>
        <dbReference type="Rhea" id="RHEA:19413"/>
        <dbReference type="Rhea" id="RHEA-COMP:9668"/>
        <dbReference type="Rhea" id="RHEA-COMP:9699"/>
        <dbReference type="ChEBI" id="CHEBI:15378"/>
        <dbReference type="ChEBI" id="CHEBI:30616"/>
        <dbReference type="ChEBI" id="CHEBI:33019"/>
        <dbReference type="ChEBI" id="CHEBI:58095"/>
        <dbReference type="ChEBI" id="CHEBI:78442"/>
        <dbReference type="ChEBI" id="CHEBI:78531"/>
        <dbReference type="ChEBI" id="CHEBI:456215"/>
        <dbReference type="EC" id="6.1.1.20"/>
    </reaction>
</comment>
<comment type="cofactor">
    <cofactor evidence="1">
        <name>Mg(2+)</name>
        <dbReference type="ChEBI" id="CHEBI:18420"/>
    </cofactor>
    <text evidence="1">Binds 2 magnesium ions per tetramer.</text>
</comment>
<comment type="subunit">
    <text evidence="1">Tetramer of two alpha and two beta subunits.</text>
</comment>
<comment type="subcellular location">
    <subcellularLocation>
        <location evidence="1">Cytoplasm</location>
    </subcellularLocation>
</comment>
<comment type="similarity">
    <text evidence="1">Belongs to the class-II aminoacyl-tRNA synthetase family. Phe-tRNA synthetase alpha subunit type 1 subfamily.</text>
</comment>
<reference key="1">
    <citation type="journal article" date="2004" name="Mol. Plant Microbe Interact.">
        <title>The genome sequence of the Gram-positive sugarcane pathogen Leifsonia xyli subsp. xyli.</title>
        <authorList>
            <person name="Monteiro-Vitorello C.B."/>
            <person name="Camargo L.E.A."/>
            <person name="Van Sluys M.A."/>
            <person name="Kitajima J.P."/>
            <person name="Truffi D."/>
            <person name="do Amaral A.M."/>
            <person name="Harakava R."/>
            <person name="de Oliveira J.C.F."/>
            <person name="Wood D."/>
            <person name="de Oliveira M.C."/>
            <person name="Miyaki C.Y."/>
            <person name="Takita M.A."/>
            <person name="da Silva A.C.R."/>
            <person name="Furlan L.R."/>
            <person name="Carraro D.M."/>
            <person name="Camarotte G."/>
            <person name="Almeida N.F. Jr."/>
            <person name="Carrer H."/>
            <person name="Coutinho L.L."/>
            <person name="El-Dorry H.A."/>
            <person name="Ferro M.I.T."/>
            <person name="Gagliardi P.R."/>
            <person name="Giglioti E."/>
            <person name="Goldman M.H.S."/>
            <person name="Goldman G.H."/>
            <person name="Kimura E.T."/>
            <person name="Ferro E.S."/>
            <person name="Kuramae E.E."/>
            <person name="Lemos E.G.M."/>
            <person name="Lemos M.V.F."/>
            <person name="Mauro S.M.Z."/>
            <person name="Machado M.A."/>
            <person name="Marino C.L."/>
            <person name="Menck C.F."/>
            <person name="Nunes L.R."/>
            <person name="Oliveira R.C."/>
            <person name="Pereira G.G."/>
            <person name="Siqueira W."/>
            <person name="de Souza A.A."/>
            <person name="Tsai S.M."/>
            <person name="Zanca A.S."/>
            <person name="Simpson A.J.G."/>
            <person name="Brumbley S.M."/>
            <person name="Setubal J.C."/>
        </authorList>
    </citation>
    <scope>NUCLEOTIDE SEQUENCE [LARGE SCALE GENOMIC DNA]</scope>
    <source>
        <strain>CTCB07</strain>
    </source>
</reference>
<sequence>MSESTEITESSVEAAVEAALAAIAAAGDSEALKVVRHDHTAEGSPLAQLNAGIRSLPGDRKAAAGKLVGGARGRVSQALAAKEAGIAAAEEAAQLVAEAVDVTALPNRWTSGARHPLSLLQERIADVFVGMGWQVAEGPELESEWYNFDALNFDADHPARAMQDTFFVEPAEAHLVMRTHTSPVQLRALLGDELPVYRIASGRVFRTDEFDATHLPVFHQTEGIAVDKGLTMAHLRGTLDHFVETLFGEGARVRLRPNYFPFTEPSAELDLWHPTFAGGARWIEWGGCGMVNPNVLRSAGIDPEVYSGFAFGMGVERALMFRNDVKDMRDMAEGDVRFSQQFGMVV</sequence>